<proteinExistence type="inferred from homology"/>
<gene>
    <name evidence="1" type="primary">tfb</name>
    <name type="ordered locus">PH1482</name>
</gene>
<feature type="chain" id="PRO_0000119328" description="Transcription initiation factor IIB">
    <location>
        <begin position="1"/>
        <end position="300"/>
    </location>
</feature>
<feature type="repeat" description="1">
    <location>
        <begin position="114"/>
        <end position="197"/>
    </location>
</feature>
<feature type="repeat" description="2">
    <location>
        <begin position="210"/>
        <end position="291"/>
    </location>
</feature>
<feature type="zinc finger region" description="TFIIB-type" evidence="2">
    <location>
        <begin position="2"/>
        <end position="34"/>
    </location>
</feature>
<feature type="binding site" evidence="2">
    <location>
        <position position="7"/>
    </location>
    <ligand>
        <name>Zn(2+)</name>
        <dbReference type="ChEBI" id="CHEBI:29105"/>
    </ligand>
</feature>
<feature type="binding site" evidence="2">
    <location>
        <position position="10"/>
    </location>
    <ligand>
        <name>Zn(2+)</name>
        <dbReference type="ChEBI" id="CHEBI:29105"/>
    </ligand>
</feature>
<feature type="binding site" evidence="2">
    <location>
        <position position="26"/>
    </location>
    <ligand>
        <name>Zn(2+)</name>
        <dbReference type="ChEBI" id="CHEBI:29105"/>
    </ligand>
</feature>
<feature type="binding site" evidence="2">
    <location>
        <position position="29"/>
    </location>
    <ligand>
        <name>Zn(2+)</name>
        <dbReference type="ChEBI" id="CHEBI:29105"/>
    </ligand>
</feature>
<name>TF2B_PYRHO</name>
<keyword id="KW-0479">Metal-binding</keyword>
<keyword id="KW-0677">Repeat</keyword>
<keyword id="KW-0804">Transcription</keyword>
<keyword id="KW-0805">Transcription regulation</keyword>
<keyword id="KW-0862">Zinc</keyword>
<keyword id="KW-0863">Zinc-finger</keyword>
<dbReference type="EMBL" id="BA000001">
    <property type="protein sequence ID" value="BAA30589.1"/>
    <property type="molecule type" value="Genomic_DNA"/>
</dbReference>
<dbReference type="PIR" id="E71023">
    <property type="entry name" value="E71023"/>
</dbReference>
<dbReference type="RefSeq" id="WP_010885561.1">
    <property type="nucleotide sequence ID" value="NC_000961.1"/>
</dbReference>
<dbReference type="SMR" id="O59151"/>
<dbReference type="STRING" id="70601.gene:9378460"/>
<dbReference type="EnsemblBacteria" id="BAA30589">
    <property type="protein sequence ID" value="BAA30589"/>
    <property type="gene ID" value="BAA30589"/>
</dbReference>
<dbReference type="GeneID" id="1443799"/>
<dbReference type="KEGG" id="pho:PH1482"/>
<dbReference type="eggNOG" id="arCOG01981">
    <property type="taxonomic scope" value="Archaea"/>
</dbReference>
<dbReference type="OrthoDB" id="7429at2157"/>
<dbReference type="Proteomes" id="UP000000752">
    <property type="component" value="Chromosome"/>
</dbReference>
<dbReference type="GO" id="GO:0097550">
    <property type="term" value="C:transcription preinitiation complex"/>
    <property type="evidence" value="ECO:0007669"/>
    <property type="project" value="TreeGrafter"/>
</dbReference>
<dbReference type="GO" id="GO:0003700">
    <property type="term" value="F:DNA-binding transcription factor activity"/>
    <property type="evidence" value="ECO:0007669"/>
    <property type="project" value="UniProtKB-UniRule"/>
</dbReference>
<dbReference type="GO" id="GO:0017025">
    <property type="term" value="F:TBP-class protein binding"/>
    <property type="evidence" value="ECO:0007669"/>
    <property type="project" value="InterPro"/>
</dbReference>
<dbReference type="GO" id="GO:0008270">
    <property type="term" value="F:zinc ion binding"/>
    <property type="evidence" value="ECO:0007669"/>
    <property type="project" value="UniProtKB-UniRule"/>
</dbReference>
<dbReference type="GO" id="GO:0070897">
    <property type="term" value="P:transcription preinitiation complex assembly"/>
    <property type="evidence" value="ECO:0007669"/>
    <property type="project" value="InterPro"/>
</dbReference>
<dbReference type="CDD" id="cd20549">
    <property type="entry name" value="CYCLIN_TFIIB_archaea_like_rpt1"/>
    <property type="match status" value="1"/>
</dbReference>
<dbReference type="CDD" id="cd20550">
    <property type="entry name" value="CYCLIN_TFIIB_archaea_like_rpt2"/>
    <property type="match status" value="1"/>
</dbReference>
<dbReference type="CDD" id="cd00350">
    <property type="entry name" value="rubredoxin_like"/>
    <property type="match status" value="1"/>
</dbReference>
<dbReference type="FunFam" id="1.10.472.10:FF:000023">
    <property type="entry name" value="Transcription initiation factor IIB"/>
    <property type="match status" value="1"/>
</dbReference>
<dbReference type="FunFam" id="1.10.472.170:FF:000001">
    <property type="entry name" value="Transcription initiation factor IIB"/>
    <property type="match status" value="1"/>
</dbReference>
<dbReference type="Gene3D" id="1.10.472.170">
    <property type="match status" value="1"/>
</dbReference>
<dbReference type="Gene3D" id="1.10.472.10">
    <property type="entry name" value="Cyclin-like"/>
    <property type="match status" value="1"/>
</dbReference>
<dbReference type="HAMAP" id="MF_00383">
    <property type="entry name" value="TF2B_arch"/>
    <property type="match status" value="1"/>
</dbReference>
<dbReference type="InterPro" id="IPR013763">
    <property type="entry name" value="Cyclin-like_dom"/>
</dbReference>
<dbReference type="InterPro" id="IPR036915">
    <property type="entry name" value="Cyclin-like_sf"/>
</dbReference>
<dbReference type="InterPro" id="IPR000812">
    <property type="entry name" value="TFIIB"/>
</dbReference>
<dbReference type="InterPro" id="IPR023484">
    <property type="entry name" value="TFIIB_arc"/>
</dbReference>
<dbReference type="InterPro" id="IPR023486">
    <property type="entry name" value="TFIIB_CS"/>
</dbReference>
<dbReference type="InterPro" id="IPR013150">
    <property type="entry name" value="TFIIB_cyclin"/>
</dbReference>
<dbReference type="InterPro" id="IPR013137">
    <property type="entry name" value="Znf_TFIIB"/>
</dbReference>
<dbReference type="NCBIfam" id="NF001658">
    <property type="entry name" value="PRK00423.1"/>
    <property type="match status" value="1"/>
</dbReference>
<dbReference type="PANTHER" id="PTHR11618:SF13">
    <property type="entry name" value="TRANSCRIPTION INITIATION FACTOR IIB"/>
    <property type="match status" value="1"/>
</dbReference>
<dbReference type="PANTHER" id="PTHR11618">
    <property type="entry name" value="TRANSCRIPTION INITIATION FACTOR IIB-RELATED"/>
    <property type="match status" value="1"/>
</dbReference>
<dbReference type="Pfam" id="PF00382">
    <property type="entry name" value="TFIIB"/>
    <property type="match status" value="2"/>
</dbReference>
<dbReference type="Pfam" id="PF08271">
    <property type="entry name" value="Zn_Ribbon_TF"/>
    <property type="match status" value="1"/>
</dbReference>
<dbReference type="PRINTS" id="PR00685">
    <property type="entry name" value="TIFACTORIIB"/>
</dbReference>
<dbReference type="SMART" id="SM00385">
    <property type="entry name" value="CYCLIN"/>
    <property type="match status" value="2"/>
</dbReference>
<dbReference type="SUPFAM" id="SSF47954">
    <property type="entry name" value="Cyclin-like"/>
    <property type="match status" value="2"/>
</dbReference>
<dbReference type="SUPFAM" id="SSF57783">
    <property type="entry name" value="Zinc beta-ribbon"/>
    <property type="match status" value="1"/>
</dbReference>
<dbReference type="PROSITE" id="PS00782">
    <property type="entry name" value="TFIIB"/>
    <property type="match status" value="2"/>
</dbReference>
<dbReference type="PROSITE" id="PS51134">
    <property type="entry name" value="ZF_TFIIB"/>
    <property type="match status" value="1"/>
</dbReference>
<protein>
    <recommendedName>
        <fullName evidence="1">Transcription initiation factor IIB</fullName>
        <shortName evidence="1">TFIIB</shortName>
    </recommendedName>
</protein>
<evidence type="ECO:0000255" key="1">
    <source>
        <dbReference type="HAMAP-Rule" id="MF_00383"/>
    </source>
</evidence>
<evidence type="ECO:0000255" key="2">
    <source>
        <dbReference type="PROSITE-ProRule" id="PRU00469"/>
    </source>
</evidence>
<sequence length="300" mass="34098">MTKQKVCPVCGSTEFIYDPERGEIVCARCGYVIEENIIDMGPEWRAFDASQREKRSRTGAPESILLHDKGLSTDIGIDRSLTGLMREKMYRLRKWQSRLRVSDAAERNLAFALSELDRITAQLKLPKHVEEEAARLYREAVRKGLIRGRSIESVIAACVYAACRLLKVPRTLDEISDIARVEKKEIGRSYRFIARNLNLTPKKLFVKPTDYVNKFADELGLSEKVRRRAIEILEEAYRRGLTSGKSPAGLVAAALYIASLLEGEKRTQREVAEVARVTEVTVRNRYKELVEKLGIKVPIT</sequence>
<organism>
    <name type="scientific">Pyrococcus horikoshii (strain ATCC 700860 / DSM 12428 / JCM 9974 / NBRC 100139 / OT-3)</name>
    <dbReference type="NCBI Taxonomy" id="70601"/>
    <lineage>
        <taxon>Archaea</taxon>
        <taxon>Methanobacteriati</taxon>
        <taxon>Methanobacteriota</taxon>
        <taxon>Thermococci</taxon>
        <taxon>Thermococcales</taxon>
        <taxon>Thermococcaceae</taxon>
        <taxon>Pyrococcus</taxon>
    </lineage>
</organism>
<reference key="1">
    <citation type="journal article" date="1998" name="DNA Res.">
        <title>Complete sequence and gene organization of the genome of a hyper-thermophilic archaebacterium, Pyrococcus horikoshii OT3.</title>
        <authorList>
            <person name="Kawarabayasi Y."/>
            <person name="Sawada M."/>
            <person name="Horikawa H."/>
            <person name="Haikawa Y."/>
            <person name="Hino Y."/>
            <person name="Yamamoto S."/>
            <person name="Sekine M."/>
            <person name="Baba S."/>
            <person name="Kosugi H."/>
            <person name="Hosoyama A."/>
            <person name="Nagai Y."/>
            <person name="Sakai M."/>
            <person name="Ogura K."/>
            <person name="Otsuka R."/>
            <person name="Nakazawa H."/>
            <person name="Takamiya M."/>
            <person name="Ohfuku Y."/>
            <person name="Funahashi T."/>
            <person name="Tanaka T."/>
            <person name="Kudoh Y."/>
            <person name="Yamazaki J."/>
            <person name="Kushida N."/>
            <person name="Oguchi A."/>
            <person name="Aoki K."/>
            <person name="Yoshizawa T."/>
            <person name="Nakamura Y."/>
            <person name="Robb F.T."/>
            <person name="Horikoshi K."/>
            <person name="Masuchi Y."/>
            <person name="Shizuya H."/>
            <person name="Kikuchi H."/>
        </authorList>
    </citation>
    <scope>NUCLEOTIDE SEQUENCE [LARGE SCALE GENOMIC DNA]</scope>
    <source>
        <strain>ATCC 700860 / DSM 12428 / JCM 9974 / NBRC 100139 / OT-3</strain>
    </source>
</reference>
<comment type="function">
    <text evidence="1">Stabilizes TBP binding to an archaeal box-A promoter. Also responsible for recruiting RNA polymerase II to the pre-initiation complex (DNA-TBP-TFIIB).</text>
</comment>
<comment type="similarity">
    <text evidence="1">Belongs to the TFIIB family.</text>
</comment>
<accession>O59151</accession>